<accession>Q4WT68</accession>
<protein>
    <recommendedName>
        <fullName>Inclusion body clearance protein iml2</fullName>
    </recommendedName>
</protein>
<keyword id="KW-0963">Cytoplasm</keyword>
<keyword id="KW-0539">Nucleus</keyword>
<keyword id="KW-0597">Phosphoprotein</keyword>
<keyword id="KW-1185">Reference proteome</keyword>
<evidence type="ECO:0000250" key="1">
    <source>
        <dbReference type="UniProtKB" id="P47031"/>
    </source>
</evidence>
<evidence type="ECO:0000256" key="2">
    <source>
        <dbReference type="SAM" id="MobiDB-lite"/>
    </source>
</evidence>
<evidence type="ECO:0000305" key="3"/>
<comment type="function">
    <text evidence="1">Inclusion body (IB) resident protein that interacts strongly with lipid droplet (LD) proteins. Involved in LD-mediated IB clearing after protein folding stress, probably by enabling access to the IBs of an LD-stored soluble sterol derivative that acts as a chaperone in inclusion clearing.</text>
</comment>
<comment type="subunit">
    <text evidence="1">Interacts with lipid droplet proteins.</text>
</comment>
<comment type="subcellular location">
    <subcellularLocation>
        <location evidence="1">Cytoplasm</location>
    </subcellularLocation>
    <subcellularLocation>
        <location evidence="1">Nucleus</location>
    </subcellularLocation>
    <text evidence="1">Localized exclusively in cytoplasmic inclusion bodies under protein folding stress conditions.</text>
</comment>
<comment type="similarity">
    <text evidence="3">Belongs to the IML2 family.</text>
</comment>
<dbReference type="EMBL" id="AAHF01000004">
    <property type="protein sequence ID" value="EAL90364.2"/>
    <property type="molecule type" value="Genomic_DNA"/>
</dbReference>
<dbReference type="RefSeq" id="XP_752402.2">
    <property type="nucleotide sequence ID" value="XM_747309.2"/>
</dbReference>
<dbReference type="FunCoup" id="Q4WT68">
    <property type="interactions" value="125"/>
</dbReference>
<dbReference type="STRING" id="330879.Q4WT68"/>
<dbReference type="EnsemblFungi" id="EAL90364">
    <property type="protein sequence ID" value="EAL90364"/>
    <property type="gene ID" value="AFUA_1G10360"/>
</dbReference>
<dbReference type="GeneID" id="3510657"/>
<dbReference type="KEGG" id="afm:AFUA_1G10360"/>
<dbReference type="VEuPathDB" id="FungiDB:Afu1g10360"/>
<dbReference type="eggNOG" id="KOG3783">
    <property type="taxonomic scope" value="Eukaryota"/>
</dbReference>
<dbReference type="HOGENOM" id="CLU_014926_1_0_1"/>
<dbReference type="InParanoid" id="Q4WT68"/>
<dbReference type="OMA" id="WNGYNRM"/>
<dbReference type="OrthoDB" id="2154985at2759"/>
<dbReference type="Proteomes" id="UP000002530">
    <property type="component" value="Chromosome 1"/>
</dbReference>
<dbReference type="GO" id="GO:0005737">
    <property type="term" value="C:cytoplasm"/>
    <property type="evidence" value="ECO:0007669"/>
    <property type="project" value="UniProtKB-SubCell"/>
</dbReference>
<dbReference type="GO" id="GO:0005634">
    <property type="term" value="C:nucleus"/>
    <property type="evidence" value="ECO:0007669"/>
    <property type="project" value="UniProtKB-SubCell"/>
</dbReference>
<dbReference type="InterPro" id="IPR019412">
    <property type="entry name" value="Iml2/TPR_39"/>
</dbReference>
<dbReference type="PANTHER" id="PTHR31859">
    <property type="entry name" value="TETRATRICOPEPTIDE REPEAT PROTEIN 39 FAMILY MEMBER"/>
    <property type="match status" value="1"/>
</dbReference>
<dbReference type="PANTHER" id="PTHR31859:SF1">
    <property type="entry name" value="TETRATRICOPEPTIDE REPEAT PROTEIN 39C"/>
    <property type="match status" value="1"/>
</dbReference>
<dbReference type="Pfam" id="PF10300">
    <property type="entry name" value="Iml2-TPR_39"/>
    <property type="match status" value="1"/>
</dbReference>
<sequence length="725" mass="81198">MFRVGSWLYGKKPAANASTQSLDSLVELRDLEDAMRAATLILNDDVDGAEAGLAEGTSAFHNLGRGVVAFIRATLGFEQDIMRQASERLNEAETSASVDQHRAQHNSYAPNTYHSPMYLPGTEFALCQAIAQLMSAIVGVLNESLTESIKAFYRLRKAYITLDAILKMEQKYMEESRAATLVESTTSGSVPSSLRHSSSNLHSSSSSISSAKGKEAAADTLAAPSNDTDVQERLADLNLSGEPAVAEDPGQTPTPINTDILDHDPDSDIFQNQIDVFVHSGSNFCFGVLLLLISMVPPSFSKLLSIIGFHGDKERGLKMLWQASKFHNLIGGIAAFAILGYYNGFVRYCDIMPDSIPGKDGDVQGYPQKRLELLLAKMRERFPKSQLWLLEESRMSGANKNLDRALELLCGEERSPLKQVEALRVFERSLNAMYLHKYELCADSFLECVDLNSWSRSLYYYIAGSCHLSLYRDAKETDSAKAAKHAELAEKYFRMAPTVAGKKRFMARQLPFDVFVARKFAKWEARAKEWKVSLVDAVGVDPIEEMIFFWNGHSRMTDEQLQESLQKLAWSESSANTTWSREGPEEKAILKLLRAAVHRSLRKHTQAKEMLEDILGQDRTLFKGHLKDDWICPVAHFEMAANLWMERPTYIATHGGAKQDSNKESARPASVNDALQYEREKVRKCKEYLEKAAKWESYELDARIGLKVTAAMEAVQKWESTHPTL</sequence>
<name>IML2_ASPFU</name>
<feature type="chain" id="PRO_0000333340" description="Inclusion body clearance protein iml2">
    <location>
        <begin position="1"/>
        <end position="725"/>
    </location>
</feature>
<feature type="region of interest" description="Disordered" evidence="2">
    <location>
        <begin position="187"/>
        <end position="209"/>
    </location>
</feature>
<proteinExistence type="inferred from homology"/>
<gene>
    <name type="primary">iml2</name>
    <name type="ORF">AFUA_1G10360</name>
</gene>
<organism>
    <name type="scientific">Aspergillus fumigatus (strain ATCC MYA-4609 / CBS 101355 / FGSC A1100 / Af293)</name>
    <name type="common">Neosartorya fumigata</name>
    <dbReference type="NCBI Taxonomy" id="330879"/>
    <lineage>
        <taxon>Eukaryota</taxon>
        <taxon>Fungi</taxon>
        <taxon>Dikarya</taxon>
        <taxon>Ascomycota</taxon>
        <taxon>Pezizomycotina</taxon>
        <taxon>Eurotiomycetes</taxon>
        <taxon>Eurotiomycetidae</taxon>
        <taxon>Eurotiales</taxon>
        <taxon>Aspergillaceae</taxon>
        <taxon>Aspergillus</taxon>
        <taxon>Aspergillus subgen. Fumigati</taxon>
    </lineage>
</organism>
<reference key="1">
    <citation type="journal article" date="2005" name="Nature">
        <title>Genomic sequence of the pathogenic and allergenic filamentous fungus Aspergillus fumigatus.</title>
        <authorList>
            <person name="Nierman W.C."/>
            <person name="Pain A."/>
            <person name="Anderson M.J."/>
            <person name="Wortman J.R."/>
            <person name="Kim H.S."/>
            <person name="Arroyo J."/>
            <person name="Berriman M."/>
            <person name="Abe K."/>
            <person name="Archer D.B."/>
            <person name="Bermejo C."/>
            <person name="Bennett J.W."/>
            <person name="Bowyer P."/>
            <person name="Chen D."/>
            <person name="Collins M."/>
            <person name="Coulsen R."/>
            <person name="Davies R."/>
            <person name="Dyer P.S."/>
            <person name="Farman M.L."/>
            <person name="Fedorova N."/>
            <person name="Fedorova N.D."/>
            <person name="Feldblyum T.V."/>
            <person name="Fischer R."/>
            <person name="Fosker N."/>
            <person name="Fraser A."/>
            <person name="Garcia J.L."/>
            <person name="Garcia M.J."/>
            <person name="Goble A."/>
            <person name="Goldman G.H."/>
            <person name="Gomi K."/>
            <person name="Griffith-Jones S."/>
            <person name="Gwilliam R."/>
            <person name="Haas B.J."/>
            <person name="Haas H."/>
            <person name="Harris D.E."/>
            <person name="Horiuchi H."/>
            <person name="Huang J."/>
            <person name="Humphray S."/>
            <person name="Jimenez J."/>
            <person name="Keller N."/>
            <person name="Khouri H."/>
            <person name="Kitamoto K."/>
            <person name="Kobayashi T."/>
            <person name="Konzack S."/>
            <person name="Kulkarni R."/>
            <person name="Kumagai T."/>
            <person name="Lafton A."/>
            <person name="Latge J.-P."/>
            <person name="Li W."/>
            <person name="Lord A."/>
            <person name="Lu C."/>
            <person name="Majoros W.H."/>
            <person name="May G.S."/>
            <person name="Miller B.L."/>
            <person name="Mohamoud Y."/>
            <person name="Molina M."/>
            <person name="Monod M."/>
            <person name="Mouyna I."/>
            <person name="Mulligan S."/>
            <person name="Murphy L.D."/>
            <person name="O'Neil S."/>
            <person name="Paulsen I."/>
            <person name="Penalva M.A."/>
            <person name="Pertea M."/>
            <person name="Price C."/>
            <person name="Pritchard B.L."/>
            <person name="Quail M.A."/>
            <person name="Rabbinowitsch E."/>
            <person name="Rawlins N."/>
            <person name="Rajandream M.A."/>
            <person name="Reichard U."/>
            <person name="Renauld H."/>
            <person name="Robson G.D."/>
            <person name="Rodriguez de Cordoba S."/>
            <person name="Rodriguez-Pena J.M."/>
            <person name="Ronning C.M."/>
            <person name="Rutter S."/>
            <person name="Salzberg S.L."/>
            <person name="Sanchez M."/>
            <person name="Sanchez-Ferrero J.C."/>
            <person name="Saunders D."/>
            <person name="Seeger K."/>
            <person name="Squares R."/>
            <person name="Squares S."/>
            <person name="Takeuchi M."/>
            <person name="Tekaia F."/>
            <person name="Turner G."/>
            <person name="Vazquez de Aldana C.R."/>
            <person name="Weidman J."/>
            <person name="White O."/>
            <person name="Woodward J.R."/>
            <person name="Yu J.-H."/>
            <person name="Fraser C.M."/>
            <person name="Galagan J.E."/>
            <person name="Asai K."/>
            <person name="Machida M."/>
            <person name="Hall N."/>
            <person name="Barrell B.G."/>
            <person name="Denning D.W."/>
        </authorList>
    </citation>
    <scope>NUCLEOTIDE SEQUENCE [LARGE SCALE GENOMIC DNA]</scope>
    <source>
        <strain>ATCC MYA-4609 / CBS 101355 / FGSC A1100 / Af293</strain>
    </source>
</reference>